<keyword id="KW-0665">Pyrimidine biosynthesis</keyword>
<keyword id="KW-0808">Transferase</keyword>
<accession>A4QEI7</accession>
<proteinExistence type="inferred from homology"/>
<comment type="function">
    <text evidence="1">Catalyzes the condensation of carbamoyl phosphate and aspartate to form carbamoyl aspartate and inorganic phosphate, the committed step in the de novo pyrimidine nucleotide biosynthesis pathway.</text>
</comment>
<comment type="catalytic activity">
    <reaction evidence="1">
        <text>carbamoyl phosphate + L-aspartate = N-carbamoyl-L-aspartate + phosphate + H(+)</text>
        <dbReference type="Rhea" id="RHEA:20013"/>
        <dbReference type="ChEBI" id="CHEBI:15378"/>
        <dbReference type="ChEBI" id="CHEBI:29991"/>
        <dbReference type="ChEBI" id="CHEBI:32814"/>
        <dbReference type="ChEBI" id="CHEBI:43474"/>
        <dbReference type="ChEBI" id="CHEBI:58228"/>
        <dbReference type="EC" id="2.1.3.2"/>
    </reaction>
</comment>
<comment type="pathway">
    <text evidence="1">Pyrimidine metabolism; UMP biosynthesis via de novo pathway; (S)-dihydroorotate from bicarbonate: step 2/3.</text>
</comment>
<comment type="subunit">
    <text evidence="1">Heterododecamer (2C3:3R2) of six catalytic PyrB chains organized as two trimers (C3), and six regulatory PyrI chains organized as three dimers (R2).</text>
</comment>
<comment type="similarity">
    <text evidence="1">Belongs to the aspartate/ornithine carbamoyltransferase superfamily. ATCase family.</text>
</comment>
<feature type="chain" id="PRO_0000301564" description="Aspartate carbamoyltransferase catalytic subunit">
    <location>
        <begin position="1"/>
        <end position="312"/>
    </location>
</feature>
<feature type="binding site" evidence="1">
    <location>
        <position position="55"/>
    </location>
    <ligand>
        <name>carbamoyl phosphate</name>
        <dbReference type="ChEBI" id="CHEBI:58228"/>
    </ligand>
</feature>
<feature type="binding site" evidence="1">
    <location>
        <position position="56"/>
    </location>
    <ligand>
        <name>carbamoyl phosphate</name>
        <dbReference type="ChEBI" id="CHEBI:58228"/>
    </ligand>
</feature>
<feature type="binding site" evidence="1">
    <location>
        <position position="83"/>
    </location>
    <ligand>
        <name>L-aspartate</name>
        <dbReference type="ChEBI" id="CHEBI:29991"/>
    </ligand>
</feature>
<feature type="binding site" evidence="1">
    <location>
        <position position="105"/>
    </location>
    <ligand>
        <name>carbamoyl phosphate</name>
        <dbReference type="ChEBI" id="CHEBI:58228"/>
    </ligand>
</feature>
<feature type="binding site" evidence="1">
    <location>
        <position position="138"/>
    </location>
    <ligand>
        <name>carbamoyl phosphate</name>
        <dbReference type="ChEBI" id="CHEBI:58228"/>
    </ligand>
</feature>
<feature type="binding site" evidence="1">
    <location>
        <position position="141"/>
    </location>
    <ligand>
        <name>carbamoyl phosphate</name>
        <dbReference type="ChEBI" id="CHEBI:58228"/>
    </ligand>
</feature>
<feature type="binding site" evidence="1">
    <location>
        <position position="171"/>
    </location>
    <ligand>
        <name>L-aspartate</name>
        <dbReference type="ChEBI" id="CHEBI:29991"/>
    </ligand>
</feature>
<feature type="binding site" evidence="1">
    <location>
        <position position="225"/>
    </location>
    <ligand>
        <name>L-aspartate</name>
        <dbReference type="ChEBI" id="CHEBI:29991"/>
    </ligand>
</feature>
<feature type="binding site" evidence="1">
    <location>
        <position position="266"/>
    </location>
    <ligand>
        <name>carbamoyl phosphate</name>
        <dbReference type="ChEBI" id="CHEBI:58228"/>
    </ligand>
</feature>
<feature type="binding site" evidence="1">
    <location>
        <position position="267"/>
    </location>
    <ligand>
        <name>carbamoyl phosphate</name>
        <dbReference type="ChEBI" id="CHEBI:58228"/>
    </ligand>
</feature>
<organism>
    <name type="scientific">Corynebacterium glutamicum (strain R)</name>
    <dbReference type="NCBI Taxonomy" id="340322"/>
    <lineage>
        <taxon>Bacteria</taxon>
        <taxon>Bacillati</taxon>
        <taxon>Actinomycetota</taxon>
        <taxon>Actinomycetes</taxon>
        <taxon>Mycobacteriales</taxon>
        <taxon>Corynebacteriaceae</taxon>
        <taxon>Corynebacterium</taxon>
    </lineage>
</organism>
<gene>
    <name evidence="1" type="primary">pyrB</name>
    <name type="ordered locus">cgR_1661</name>
</gene>
<reference key="1">
    <citation type="journal article" date="2007" name="Microbiology">
        <title>Comparative analysis of the Corynebacterium glutamicum group and complete genome sequence of strain R.</title>
        <authorList>
            <person name="Yukawa H."/>
            <person name="Omumasaba C.A."/>
            <person name="Nonaka H."/>
            <person name="Kos P."/>
            <person name="Okai N."/>
            <person name="Suzuki N."/>
            <person name="Suda M."/>
            <person name="Tsuge Y."/>
            <person name="Watanabe J."/>
            <person name="Ikeda Y."/>
            <person name="Vertes A.A."/>
            <person name="Inui M."/>
        </authorList>
    </citation>
    <scope>NUCLEOTIDE SEQUENCE [LARGE SCALE GENOMIC DNA]</scope>
    <source>
        <strain>R</strain>
    </source>
</reference>
<evidence type="ECO:0000255" key="1">
    <source>
        <dbReference type="HAMAP-Rule" id="MF_00001"/>
    </source>
</evidence>
<sequence length="312" mass="33912">MKHLLSISDLSKDEIVGLLDEADRFKEVLEGREVKKLPTLRGRTIFTLFYENSTRTRSSFETAGKWMSADVINISASSSSVKKGESLKDTGLTLSAIGADAIIMRHPASGAAQQLAQFVAPGGNGPSVINAGDGSHQHPTQALLDALTIRQRTGRIEGLKVVIVGDCLHSRVVRSNVDLLSTLGAEVVLVAPPTLLPMGVENWPVRFSYDMDAEIADADVVMMLRVQQERMQGGFFPSHREYATLYGMSKEREARLKDSAIIMHPGPMLRGMEINFQVADAPRTAVLQQVSNGVHMRMAILFALVAGSDATI</sequence>
<dbReference type="EC" id="2.1.3.2" evidence="1"/>
<dbReference type="EMBL" id="AP009044">
    <property type="protein sequence ID" value="BAF54653.1"/>
    <property type="molecule type" value="Genomic_DNA"/>
</dbReference>
<dbReference type="RefSeq" id="WP_003855980.1">
    <property type="nucleotide sequence ID" value="NC_009342.1"/>
</dbReference>
<dbReference type="SMR" id="A4QEI7"/>
<dbReference type="KEGG" id="cgt:cgR_1661"/>
<dbReference type="HOGENOM" id="CLU_043846_2_0_11"/>
<dbReference type="PhylomeDB" id="A4QEI7"/>
<dbReference type="UniPathway" id="UPA00070">
    <property type="reaction ID" value="UER00116"/>
</dbReference>
<dbReference type="Proteomes" id="UP000006698">
    <property type="component" value="Chromosome"/>
</dbReference>
<dbReference type="GO" id="GO:0005829">
    <property type="term" value="C:cytosol"/>
    <property type="evidence" value="ECO:0007669"/>
    <property type="project" value="TreeGrafter"/>
</dbReference>
<dbReference type="GO" id="GO:0016597">
    <property type="term" value="F:amino acid binding"/>
    <property type="evidence" value="ECO:0007669"/>
    <property type="project" value="InterPro"/>
</dbReference>
<dbReference type="GO" id="GO:0004070">
    <property type="term" value="F:aspartate carbamoyltransferase activity"/>
    <property type="evidence" value="ECO:0007669"/>
    <property type="project" value="UniProtKB-UniRule"/>
</dbReference>
<dbReference type="GO" id="GO:0006207">
    <property type="term" value="P:'de novo' pyrimidine nucleobase biosynthetic process"/>
    <property type="evidence" value="ECO:0007669"/>
    <property type="project" value="InterPro"/>
</dbReference>
<dbReference type="GO" id="GO:0044205">
    <property type="term" value="P:'de novo' UMP biosynthetic process"/>
    <property type="evidence" value="ECO:0007669"/>
    <property type="project" value="UniProtKB-UniRule"/>
</dbReference>
<dbReference type="GO" id="GO:0006520">
    <property type="term" value="P:amino acid metabolic process"/>
    <property type="evidence" value="ECO:0007669"/>
    <property type="project" value="InterPro"/>
</dbReference>
<dbReference type="FunFam" id="3.40.50.1370:FF:000007">
    <property type="entry name" value="Aspartate carbamoyltransferase"/>
    <property type="match status" value="1"/>
</dbReference>
<dbReference type="Gene3D" id="3.40.50.1370">
    <property type="entry name" value="Aspartate/ornithine carbamoyltransferase"/>
    <property type="match status" value="2"/>
</dbReference>
<dbReference type="HAMAP" id="MF_00001">
    <property type="entry name" value="Asp_carb_tr"/>
    <property type="match status" value="1"/>
</dbReference>
<dbReference type="InterPro" id="IPR006132">
    <property type="entry name" value="Asp/Orn_carbamoyltranf_P-bd"/>
</dbReference>
<dbReference type="InterPro" id="IPR006130">
    <property type="entry name" value="Asp/Orn_carbamoylTrfase"/>
</dbReference>
<dbReference type="InterPro" id="IPR036901">
    <property type="entry name" value="Asp/Orn_carbamoylTrfase_sf"/>
</dbReference>
<dbReference type="InterPro" id="IPR002082">
    <property type="entry name" value="Asp_carbamoyltransf"/>
</dbReference>
<dbReference type="InterPro" id="IPR006131">
    <property type="entry name" value="Asp_carbamoyltransf_Asp/Orn-bd"/>
</dbReference>
<dbReference type="NCBIfam" id="TIGR00670">
    <property type="entry name" value="asp_carb_tr"/>
    <property type="match status" value="1"/>
</dbReference>
<dbReference type="NCBIfam" id="NF002032">
    <property type="entry name" value="PRK00856.1"/>
    <property type="match status" value="1"/>
</dbReference>
<dbReference type="PANTHER" id="PTHR45753:SF6">
    <property type="entry name" value="ASPARTATE CARBAMOYLTRANSFERASE"/>
    <property type="match status" value="1"/>
</dbReference>
<dbReference type="PANTHER" id="PTHR45753">
    <property type="entry name" value="ORNITHINE CARBAMOYLTRANSFERASE, MITOCHONDRIAL"/>
    <property type="match status" value="1"/>
</dbReference>
<dbReference type="Pfam" id="PF00185">
    <property type="entry name" value="OTCace"/>
    <property type="match status" value="1"/>
</dbReference>
<dbReference type="Pfam" id="PF02729">
    <property type="entry name" value="OTCace_N"/>
    <property type="match status" value="1"/>
</dbReference>
<dbReference type="PRINTS" id="PR00100">
    <property type="entry name" value="AOTCASE"/>
</dbReference>
<dbReference type="PRINTS" id="PR00101">
    <property type="entry name" value="ATCASE"/>
</dbReference>
<dbReference type="SUPFAM" id="SSF53671">
    <property type="entry name" value="Aspartate/ornithine carbamoyltransferase"/>
    <property type="match status" value="1"/>
</dbReference>
<dbReference type="PROSITE" id="PS00097">
    <property type="entry name" value="CARBAMOYLTRANSFERASE"/>
    <property type="match status" value="1"/>
</dbReference>
<protein>
    <recommendedName>
        <fullName evidence="1">Aspartate carbamoyltransferase catalytic subunit</fullName>
        <ecNumber evidence="1">2.1.3.2</ecNumber>
    </recommendedName>
    <alternativeName>
        <fullName evidence="1">Aspartate transcarbamylase</fullName>
        <shortName evidence="1">ATCase</shortName>
    </alternativeName>
</protein>
<name>PYRB_CORGB</name>